<feature type="chain" id="PRO_1000145394" description="Peptide methionine sulfoxide reductase MsrA">
    <location>
        <begin position="1"/>
        <end position="218"/>
    </location>
</feature>
<feature type="active site" evidence="1">
    <location>
        <position position="57"/>
    </location>
</feature>
<protein>
    <recommendedName>
        <fullName evidence="1">Peptide methionine sulfoxide reductase MsrA</fullName>
        <shortName evidence="1">Protein-methionine-S-oxide reductase</shortName>
        <ecNumber evidence="1">1.8.4.11</ecNumber>
    </recommendedName>
    <alternativeName>
        <fullName evidence="1">Peptide-methionine (S)-S-oxide reductase</fullName>
        <shortName evidence="1">Peptide Met(O) reductase</shortName>
    </alternativeName>
</protein>
<dbReference type="EC" id="1.8.4.11" evidence="1"/>
<dbReference type="EMBL" id="CP000888">
    <property type="protein sequence ID" value="ACD74440.1"/>
    <property type="molecule type" value="Genomic_DNA"/>
</dbReference>
<dbReference type="RefSeq" id="WP_002965585.1">
    <property type="nucleotide sequence ID" value="NC_010740.1"/>
</dbReference>
<dbReference type="SMR" id="B2SC53"/>
<dbReference type="GeneID" id="97534887"/>
<dbReference type="KEGG" id="bmc:BAbS19_II09570"/>
<dbReference type="HOGENOM" id="CLU_031040_10_3_5"/>
<dbReference type="Proteomes" id="UP000002565">
    <property type="component" value="Chromosome 2"/>
</dbReference>
<dbReference type="GO" id="GO:0005737">
    <property type="term" value="C:cytoplasm"/>
    <property type="evidence" value="ECO:0007669"/>
    <property type="project" value="TreeGrafter"/>
</dbReference>
<dbReference type="GO" id="GO:0036456">
    <property type="term" value="F:L-methionine-(S)-S-oxide reductase activity"/>
    <property type="evidence" value="ECO:0007669"/>
    <property type="project" value="TreeGrafter"/>
</dbReference>
<dbReference type="GO" id="GO:0008113">
    <property type="term" value="F:peptide-methionine (S)-S-oxide reductase activity"/>
    <property type="evidence" value="ECO:0007669"/>
    <property type="project" value="UniProtKB-UniRule"/>
</dbReference>
<dbReference type="GO" id="GO:0034599">
    <property type="term" value="P:cellular response to oxidative stress"/>
    <property type="evidence" value="ECO:0007669"/>
    <property type="project" value="TreeGrafter"/>
</dbReference>
<dbReference type="GO" id="GO:0036211">
    <property type="term" value="P:protein modification process"/>
    <property type="evidence" value="ECO:0007669"/>
    <property type="project" value="UniProtKB-UniRule"/>
</dbReference>
<dbReference type="FunFam" id="3.30.1060.10:FF:000001">
    <property type="entry name" value="Peptide methionine sulfoxide reductase MsrA"/>
    <property type="match status" value="1"/>
</dbReference>
<dbReference type="Gene3D" id="3.30.1060.10">
    <property type="entry name" value="Peptide methionine sulphoxide reductase MsrA"/>
    <property type="match status" value="1"/>
</dbReference>
<dbReference type="HAMAP" id="MF_01401">
    <property type="entry name" value="MsrA"/>
    <property type="match status" value="1"/>
</dbReference>
<dbReference type="InterPro" id="IPR002569">
    <property type="entry name" value="Met_Sox_Rdtase_MsrA_dom"/>
</dbReference>
<dbReference type="InterPro" id="IPR036509">
    <property type="entry name" value="Met_Sox_Rdtase_MsrA_sf"/>
</dbReference>
<dbReference type="InterPro" id="IPR050162">
    <property type="entry name" value="MsrA_MetSO_reductase"/>
</dbReference>
<dbReference type="NCBIfam" id="TIGR00401">
    <property type="entry name" value="msrA"/>
    <property type="match status" value="1"/>
</dbReference>
<dbReference type="PANTHER" id="PTHR42799">
    <property type="entry name" value="MITOCHONDRIAL PEPTIDE METHIONINE SULFOXIDE REDUCTASE"/>
    <property type="match status" value="1"/>
</dbReference>
<dbReference type="PANTHER" id="PTHR42799:SF2">
    <property type="entry name" value="MITOCHONDRIAL PEPTIDE METHIONINE SULFOXIDE REDUCTASE"/>
    <property type="match status" value="1"/>
</dbReference>
<dbReference type="Pfam" id="PF01625">
    <property type="entry name" value="PMSR"/>
    <property type="match status" value="1"/>
</dbReference>
<dbReference type="SUPFAM" id="SSF55068">
    <property type="entry name" value="Peptide methionine sulfoxide reductase"/>
    <property type="match status" value="1"/>
</dbReference>
<evidence type="ECO:0000255" key="1">
    <source>
        <dbReference type="HAMAP-Rule" id="MF_01401"/>
    </source>
</evidence>
<proteinExistence type="inferred from homology"/>
<gene>
    <name evidence="1" type="primary">msrA</name>
    <name type="ordered locus">BAbS19_II09570</name>
</gene>
<accession>B2SC53</accession>
<sequence length="218" mass="24017">MSFFDSYRKKMQMPSKEEVLPGRVQPIPTAAAHFVSGHPLKGPWPDGMKQVLFGMGCFWGAERLFWQVPGVYVTAVGYAGGITPNPTYEETCTGLTGHAEVVLVVYDPKVVTLNELLALFWEEHDPTQGMRQGNDIGTTYRSVIYTFNAVDRAVAEKSRDAYSQALASRGLGPVTTQIADAPDFYYAEDYHQQYLAKNPDGYCGLRGTGVSCPIPLAH</sequence>
<keyword id="KW-0560">Oxidoreductase</keyword>
<name>MSRA_BRUA1</name>
<reference key="1">
    <citation type="journal article" date="2008" name="PLoS ONE">
        <title>Genome sequence of Brucella abortus vaccine strain S19 compared to virulent strains yields candidate virulence genes.</title>
        <authorList>
            <person name="Crasta O.R."/>
            <person name="Folkerts O."/>
            <person name="Fei Z."/>
            <person name="Mane S.P."/>
            <person name="Evans C."/>
            <person name="Martino-Catt S."/>
            <person name="Bricker B."/>
            <person name="Yu G."/>
            <person name="Du L."/>
            <person name="Sobral B.W."/>
        </authorList>
    </citation>
    <scope>NUCLEOTIDE SEQUENCE [LARGE SCALE GENOMIC DNA]</scope>
    <source>
        <strain>S19</strain>
    </source>
</reference>
<comment type="function">
    <text evidence="1">Has an important function as a repair enzyme for proteins that have been inactivated by oxidation. Catalyzes the reversible oxidation-reduction of methionine sulfoxide in proteins to methionine.</text>
</comment>
<comment type="catalytic activity">
    <reaction evidence="1">
        <text>L-methionyl-[protein] + [thioredoxin]-disulfide + H2O = L-methionyl-(S)-S-oxide-[protein] + [thioredoxin]-dithiol</text>
        <dbReference type="Rhea" id="RHEA:14217"/>
        <dbReference type="Rhea" id="RHEA-COMP:10698"/>
        <dbReference type="Rhea" id="RHEA-COMP:10700"/>
        <dbReference type="Rhea" id="RHEA-COMP:12313"/>
        <dbReference type="Rhea" id="RHEA-COMP:12315"/>
        <dbReference type="ChEBI" id="CHEBI:15377"/>
        <dbReference type="ChEBI" id="CHEBI:16044"/>
        <dbReference type="ChEBI" id="CHEBI:29950"/>
        <dbReference type="ChEBI" id="CHEBI:44120"/>
        <dbReference type="ChEBI" id="CHEBI:50058"/>
        <dbReference type="EC" id="1.8.4.11"/>
    </reaction>
</comment>
<comment type="catalytic activity">
    <reaction evidence="1">
        <text>[thioredoxin]-disulfide + L-methionine + H2O = L-methionine (S)-S-oxide + [thioredoxin]-dithiol</text>
        <dbReference type="Rhea" id="RHEA:19993"/>
        <dbReference type="Rhea" id="RHEA-COMP:10698"/>
        <dbReference type="Rhea" id="RHEA-COMP:10700"/>
        <dbReference type="ChEBI" id="CHEBI:15377"/>
        <dbReference type="ChEBI" id="CHEBI:29950"/>
        <dbReference type="ChEBI" id="CHEBI:50058"/>
        <dbReference type="ChEBI" id="CHEBI:57844"/>
        <dbReference type="ChEBI" id="CHEBI:58772"/>
        <dbReference type="EC" id="1.8.4.11"/>
    </reaction>
</comment>
<comment type="similarity">
    <text evidence="1">Belongs to the MsrA Met sulfoxide reductase family.</text>
</comment>
<organism>
    <name type="scientific">Brucella abortus (strain S19)</name>
    <dbReference type="NCBI Taxonomy" id="430066"/>
    <lineage>
        <taxon>Bacteria</taxon>
        <taxon>Pseudomonadati</taxon>
        <taxon>Pseudomonadota</taxon>
        <taxon>Alphaproteobacteria</taxon>
        <taxon>Hyphomicrobiales</taxon>
        <taxon>Brucellaceae</taxon>
        <taxon>Brucella/Ochrobactrum group</taxon>
        <taxon>Brucella</taxon>
    </lineage>
</organism>